<comment type="subunit">
    <text evidence="1 2">Found in a complex composed of MORF4L1, MRFAP1 and RB1. Interacts via its N-terminus with MORF4L1. Interacts with CSTB and MORF4L2 (By similarity).</text>
</comment>
<comment type="subcellular location">
    <subcellularLocation>
        <location evidence="2">Nucleus</location>
    </subcellularLocation>
    <subcellularLocation>
        <location evidence="2">Cytoplasm</location>
        <location evidence="2">Perinuclear region</location>
    </subcellularLocation>
    <text evidence="2">Colocalizes with MORF4L1 to cell nuclei.</text>
</comment>
<comment type="similarity">
    <text evidence="4">Belongs to the MORF4 family-associated protein family.</text>
</comment>
<name>MOFA1_PONAB</name>
<keyword id="KW-0175">Coiled coil</keyword>
<keyword id="KW-0963">Cytoplasm</keyword>
<keyword id="KW-0539">Nucleus</keyword>
<keyword id="KW-1185">Reference proteome</keyword>
<feature type="chain" id="PRO_0000306178" description="MORF4 family-associated protein 1">
    <location>
        <begin position="1"/>
        <end position="127"/>
    </location>
</feature>
<feature type="coiled-coil region" evidence="3">
    <location>
        <begin position="87"/>
        <end position="118"/>
    </location>
</feature>
<proteinExistence type="evidence at transcript level"/>
<sequence>MRPLDIDEVEAPEEVEVLEPEEDFEQFLLPVINEMREDIASLIREHGRAYLRTRSKLWEMDNMLIQIKTQVEASEESALNHVQHPSGEADERVSELCEKAEEKAKEIAKMAEMLVELVWRIERSESS</sequence>
<accession>Q5RC01</accession>
<dbReference type="EMBL" id="CR858481">
    <property type="protein sequence ID" value="CAH90709.1"/>
    <property type="molecule type" value="mRNA"/>
</dbReference>
<dbReference type="RefSeq" id="NP_001125392.1">
    <property type="nucleotide sequence ID" value="NM_001131920.1"/>
</dbReference>
<dbReference type="SMR" id="Q5RC01"/>
<dbReference type="FunCoup" id="Q5RC01">
    <property type="interactions" value="81"/>
</dbReference>
<dbReference type="STRING" id="9601.ENSPPYP00000016291"/>
<dbReference type="Ensembl" id="ENSPPYT00000016952.2">
    <property type="protein sequence ID" value="ENSPPYP00000016291.1"/>
    <property type="gene ID" value="ENSPPYG00000014581.2"/>
</dbReference>
<dbReference type="GeneID" id="100172297"/>
<dbReference type="KEGG" id="pon:100172297"/>
<dbReference type="CTD" id="114932"/>
<dbReference type="eggNOG" id="ENOG502TG9W">
    <property type="taxonomic scope" value="Eukaryota"/>
</dbReference>
<dbReference type="GeneTree" id="ENSGT00940000155541"/>
<dbReference type="HOGENOM" id="CLU_166966_1_0_1"/>
<dbReference type="InParanoid" id="Q5RC01"/>
<dbReference type="OMA" id="IAKMAQM"/>
<dbReference type="OrthoDB" id="9837479at2759"/>
<dbReference type="TreeFam" id="TF338232"/>
<dbReference type="Proteomes" id="UP000001595">
    <property type="component" value="Chromosome 4"/>
</dbReference>
<dbReference type="GO" id="GO:0005634">
    <property type="term" value="C:nucleus"/>
    <property type="evidence" value="ECO:0007669"/>
    <property type="project" value="UniProtKB-SubCell"/>
</dbReference>
<dbReference type="GO" id="GO:0048471">
    <property type="term" value="C:perinuclear region of cytoplasm"/>
    <property type="evidence" value="ECO:0007669"/>
    <property type="project" value="UniProtKB-SubCell"/>
</dbReference>
<dbReference type="GO" id="GO:0042802">
    <property type="term" value="F:identical protein binding"/>
    <property type="evidence" value="ECO:0007669"/>
    <property type="project" value="Ensembl"/>
</dbReference>
<dbReference type="InterPro" id="IPR029254">
    <property type="entry name" value="MRFAP1"/>
</dbReference>
<dbReference type="PANTHER" id="PTHR31324:SF2">
    <property type="entry name" value="MORF4 FAMILY-ASSOCIATED PROTEIN 1-LIKE 1"/>
    <property type="match status" value="1"/>
</dbReference>
<dbReference type="PANTHER" id="PTHR31324">
    <property type="entry name" value="MORF4 FAMILY-ASSOCIATED PROTEIN 1-RELATED"/>
    <property type="match status" value="1"/>
</dbReference>
<dbReference type="Pfam" id="PF15155">
    <property type="entry name" value="MRFAP1"/>
    <property type="match status" value="1"/>
</dbReference>
<gene>
    <name evidence="2" type="primary">MRFAP1</name>
</gene>
<evidence type="ECO:0000250" key="1">
    <source>
        <dbReference type="UniProtKB" id="Q5M820"/>
    </source>
</evidence>
<evidence type="ECO:0000250" key="2">
    <source>
        <dbReference type="UniProtKB" id="Q9Y605"/>
    </source>
</evidence>
<evidence type="ECO:0000255" key="3"/>
<evidence type="ECO:0000305" key="4"/>
<evidence type="ECO:0000312" key="5">
    <source>
        <dbReference type="EMBL" id="CAH90709.1"/>
    </source>
</evidence>
<organism>
    <name type="scientific">Pongo abelii</name>
    <name type="common">Sumatran orangutan</name>
    <name type="synonym">Pongo pygmaeus abelii</name>
    <dbReference type="NCBI Taxonomy" id="9601"/>
    <lineage>
        <taxon>Eukaryota</taxon>
        <taxon>Metazoa</taxon>
        <taxon>Chordata</taxon>
        <taxon>Craniata</taxon>
        <taxon>Vertebrata</taxon>
        <taxon>Euteleostomi</taxon>
        <taxon>Mammalia</taxon>
        <taxon>Eutheria</taxon>
        <taxon>Euarchontoglires</taxon>
        <taxon>Primates</taxon>
        <taxon>Haplorrhini</taxon>
        <taxon>Catarrhini</taxon>
        <taxon>Hominidae</taxon>
        <taxon>Pongo</taxon>
    </lineage>
</organism>
<protein>
    <recommendedName>
        <fullName>MORF4 family-associated protein 1</fullName>
    </recommendedName>
</protein>
<reference evidence="5" key="1">
    <citation type="submission" date="2004-11" db="EMBL/GenBank/DDBJ databases">
        <authorList>
            <consortium name="The German cDNA consortium"/>
        </authorList>
    </citation>
    <scope>NUCLEOTIDE SEQUENCE [LARGE SCALE MRNA]</scope>
    <source>
        <tissue evidence="5">Kidney</tissue>
    </source>
</reference>